<reference key="1">
    <citation type="journal article" date="2003" name="Nature">
        <title>Unique physiological and pathogenic features of Leptospira interrogans revealed by whole-genome sequencing.</title>
        <authorList>
            <person name="Ren S.-X."/>
            <person name="Fu G."/>
            <person name="Jiang X.-G."/>
            <person name="Zeng R."/>
            <person name="Miao Y.-G."/>
            <person name="Xu H."/>
            <person name="Zhang Y.-X."/>
            <person name="Xiong H."/>
            <person name="Lu G."/>
            <person name="Lu L.-F."/>
            <person name="Jiang H.-Q."/>
            <person name="Jia J."/>
            <person name="Tu Y.-F."/>
            <person name="Jiang J.-X."/>
            <person name="Gu W.-Y."/>
            <person name="Zhang Y.-Q."/>
            <person name="Cai Z."/>
            <person name="Sheng H.-H."/>
            <person name="Yin H.-F."/>
            <person name="Zhang Y."/>
            <person name="Zhu G.-F."/>
            <person name="Wan M."/>
            <person name="Huang H.-L."/>
            <person name="Qian Z."/>
            <person name="Wang S.-Y."/>
            <person name="Ma W."/>
            <person name="Yao Z.-J."/>
            <person name="Shen Y."/>
            <person name="Qiang B.-Q."/>
            <person name="Xia Q.-C."/>
            <person name="Guo X.-K."/>
            <person name="Danchin A."/>
            <person name="Saint Girons I."/>
            <person name="Somerville R.L."/>
            <person name="Wen Y.-M."/>
            <person name="Shi M.-H."/>
            <person name="Chen Z."/>
            <person name="Xu J.-G."/>
            <person name="Zhao G.-P."/>
        </authorList>
    </citation>
    <scope>NUCLEOTIDE SEQUENCE [LARGE SCALE GENOMIC DNA]</scope>
    <source>
        <strain>56601</strain>
    </source>
</reference>
<accession>Q8F743</accession>
<feature type="chain" id="PRO_0000374362" description="tRNA-2-methylthio-N(6)-dimethylallyladenosine synthase">
    <location>
        <begin position="1"/>
        <end position="449"/>
    </location>
</feature>
<feature type="domain" description="MTTase N-terminal" evidence="1">
    <location>
        <begin position="11"/>
        <end position="127"/>
    </location>
</feature>
<feature type="domain" description="Radical SAM core" evidence="2">
    <location>
        <begin position="150"/>
        <end position="378"/>
    </location>
</feature>
<feature type="domain" description="TRAM" evidence="1">
    <location>
        <begin position="381"/>
        <end position="449"/>
    </location>
</feature>
<feature type="binding site" evidence="1">
    <location>
        <position position="20"/>
    </location>
    <ligand>
        <name>[4Fe-4S] cluster</name>
        <dbReference type="ChEBI" id="CHEBI:49883"/>
        <label>1</label>
    </ligand>
</feature>
<feature type="binding site" evidence="1">
    <location>
        <position position="56"/>
    </location>
    <ligand>
        <name>[4Fe-4S] cluster</name>
        <dbReference type="ChEBI" id="CHEBI:49883"/>
        <label>1</label>
    </ligand>
</feature>
<feature type="binding site" evidence="1">
    <location>
        <position position="90"/>
    </location>
    <ligand>
        <name>[4Fe-4S] cluster</name>
        <dbReference type="ChEBI" id="CHEBI:49883"/>
        <label>1</label>
    </ligand>
</feature>
<feature type="binding site" evidence="1">
    <location>
        <position position="164"/>
    </location>
    <ligand>
        <name>[4Fe-4S] cluster</name>
        <dbReference type="ChEBI" id="CHEBI:49883"/>
        <label>2</label>
        <note>4Fe-4S-S-AdoMet</note>
    </ligand>
</feature>
<feature type="binding site" evidence="1">
    <location>
        <position position="168"/>
    </location>
    <ligand>
        <name>[4Fe-4S] cluster</name>
        <dbReference type="ChEBI" id="CHEBI:49883"/>
        <label>2</label>
        <note>4Fe-4S-S-AdoMet</note>
    </ligand>
</feature>
<feature type="binding site" evidence="1">
    <location>
        <position position="171"/>
    </location>
    <ligand>
        <name>[4Fe-4S] cluster</name>
        <dbReference type="ChEBI" id="CHEBI:49883"/>
        <label>2</label>
        <note>4Fe-4S-S-AdoMet</note>
    </ligand>
</feature>
<organism>
    <name type="scientific">Leptospira interrogans serogroup Icterohaemorrhagiae serovar Lai (strain 56601)</name>
    <dbReference type="NCBI Taxonomy" id="189518"/>
    <lineage>
        <taxon>Bacteria</taxon>
        <taxon>Pseudomonadati</taxon>
        <taxon>Spirochaetota</taxon>
        <taxon>Spirochaetia</taxon>
        <taxon>Leptospirales</taxon>
        <taxon>Leptospiraceae</taxon>
        <taxon>Leptospira</taxon>
    </lineage>
</organism>
<evidence type="ECO:0000255" key="1">
    <source>
        <dbReference type="HAMAP-Rule" id="MF_01864"/>
    </source>
</evidence>
<evidence type="ECO:0000255" key="2">
    <source>
        <dbReference type="PROSITE-ProRule" id="PRU01266"/>
    </source>
</evidence>
<keyword id="KW-0004">4Fe-4S</keyword>
<keyword id="KW-0963">Cytoplasm</keyword>
<keyword id="KW-0408">Iron</keyword>
<keyword id="KW-0411">Iron-sulfur</keyword>
<keyword id="KW-0479">Metal-binding</keyword>
<keyword id="KW-1185">Reference proteome</keyword>
<keyword id="KW-0949">S-adenosyl-L-methionine</keyword>
<keyword id="KW-0808">Transferase</keyword>
<keyword id="KW-0819">tRNA processing</keyword>
<sequence>MSVLEQEKKSGKVYIETYGCQMNEYDSGIVSSLMRDAEYSTSSDPENSDIIFLNTCAIRENAHAKIYNRLQSLGYLKKRNPNLVIGVLGCMAQNLGDDLFHQELPLDLVVGPDNYRSLPELIQRIRKGENSISLTRLSKIETYDEIEPRVVNGIQAFVTIMRGCNNFCTFCVVPYTRGRERSRDPKSIVREVQDLVQKGIRQITLLGQNVNSYKEQDTDFAGLIQMLLDETSIERIRFTSPHPKDFPTHLLQLMSENPRFCPNIHLPLQAGNTRVLEEMKRSYSKEEFLDVVKEIRNIVPDVGITTDIIVGFPNETEEEFEDTLAVVREVQFDMAFMFKYSEREGTMAQRKLPDNVPEEVKSARLTKLVDLQTSISHEQNRARIGRVYSILIENISRKSEKQLCGRTPCGRMTVFPLPQETNVSGMIGSTVSVQIESATSATLKGRILA</sequence>
<dbReference type="EC" id="2.8.4.3" evidence="1"/>
<dbReference type="EMBL" id="AE010300">
    <property type="protein sequence ID" value="AAN48304.1"/>
    <property type="molecule type" value="Genomic_DNA"/>
</dbReference>
<dbReference type="RefSeq" id="NP_711286.1">
    <property type="nucleotide sequence ID" value="NC_004342.2"/>
</dbReference>
<dbReference type="RefSeq" id="WP_000114512.1">
    <property type="nucleotide sequence ID" value="NC_004342.2"/>
</dbReference>
<dbReference type="SMR" id="Q8F743"/>
<dbReference type="FunCoup" id="Q8F743">
    <property type="interactions" value="494"/>
</dbReference>
<dbReference type="STRING" id="189518.LA_1105"/>
<dbReference type="PaxDb" id="189518-LA_1105"/>
<dbReference type="EnsemblBacteria" id="AAN48304">
    <property type="protein sequence ID" value="AAN48304"/>
    <property type="gene ID" value="LA_1105"/>
</dbReference>
<dbReference type="GeneID" id="61142448"/>
<dbReference type="KEGG" id="lil:LA_1105"/>
<dbReference type="PATRIC" id="fig|189518.3.peg.1098"/>
<dbReference type="HOGENOM" id="CLU_018697_2_0_12"/>
<dbReference type="InParanoid" id="Q8F743"/>
<dbReference type="OrthoDB" id="9805215at2"/>
<dbReference type="Proteomes" id="UP000001408">
    <property type="component" value="Chromosome I"/>
</dbReference>
<dbReference type="GO" id="GO:0005829">
    <property type="term" value="C:cytosol"/>
    <property type="evidence" value="ECO:0000318"/>
    <property type="project" value="GO_Central"/>
</dbReference>
<dbReference type="GO" id="GO:0051539">
    <property type="term" value="F:4 iron, 4 sulfur cluster binding"/>
    <property type="evidence" value="ECO:0000318"/>
    <property type="project" value="GO_Central"/>
</dbReference>
<dbReference type="GO" id="GO:0046872">
    <property type="term" value="F:metal ion binding"/>
    <property type="evidence" value="ECO:0007669"/>
    <property type="project" value="UniProtKB-KW"/>
</dbReference>
<dbReference type="GO" id="GO:0035597">
    <property type="term" value="F:N6-isopentenyladenosine methylthiotransferase activity"/>
    <property type="evidence" value="ECO:0000318"/>
    <property type="project" value="GO_Central"/>
</dbReference>
<dbReference type="GO" id="GO:0035600">
    <property type="term" value="P:tRNA methylthiolation"/>
    <property type="evidence" value="ECO:0000318"/>
    <property type="project" value="GO_Central"/>
</dbReference>
<dbReference type="CDD" id="cd01335">
    <property type="entry name" value="Radical_SAM"/>
    <property type="match status" value="1"/>
</dbReference>
<dbReference type="FunFam" id="3.40.50.12160:FF:000012">
    <property type="entry name" value="tRNA-2-methylthio-N(6)-dimethylallyladenosine synthase"/>
    <property type="match status" value="1"/>
</dbReference>
<dbReference type="FunFam" id="3.80.30.20:FF:000009">
    <property type="entry name" value="tRNA-2-methylthio-N(6)-dimethylallyladenosine synthase"/>
    <property type="match status" value="1"/>
</dbReference>
<dbReference type="Gene3D" id="3.40.50.12160">
    <property type="entry name" value="Methylthiotransferase, N-terminal domain"/>
    <property type="match status" value="1"/>
</dbReference>
<dbReference type="Gene3D" id="3.80.30.20">
    <property type="entry name" value="tm_1862 like domain"/>
    <property type="match status" value="1"/>
</dbReference>
<dbReference type="HAMAP" id="MF_01864">
    <property type="entry name" value="tRNA_metthiotr_MiaB"/>
    <property type="match status" value="1"/>
</dbReference>
<dbReference type="InterPro" id="IPR006638">
    <property type="entry name" value="Elp3/MiaA/NifB-like_rSAM"/>
</dbReference>
<dbReference type="InterPro" id="IPR005839">
    <property type="entry name" value="Methylthiotransferase"/>
</dbReference>
<dbReference type="InterPro" id="IPR020612">
    <property type="entry name" value="Methylthiotransferase_CS"/>
</dbReference>
<dbReference type="InterPro" id="IPR013848">
    <property type="entry name" value="Methylthiotransferase_N"/>
</dbReference>
<dbReference type="InterPro" id="IPR038135">
    <property type="entry name" value="Methylthiotransferase_N_sf"/>
</dbReference>
<dbReference type="InterPro" id="IPR006463">
    <property type="entry name" value="MiaB_methiolase"/>
</dbReference>
<dbReference type="InterPro" id="IPR007197">
    <property type="entry name" value="rSAM"/>
</dbReference>
<dbReference type="InterPro" id="IPR023404">
    <property type="entry name" value="rSAM_horseshoe"/>
</dbReference>
<dbReference type="InterPro" id="IPR002792">
    <property type="entry name" value="TRAM_dom"/>
</dbReference>
<dbReference type="NCBIfam" id="TIGR01574">
    <property type="entry name" value="miaB-methiolase"/>
    <property type="match status" value="1"/>
</dbReference>
<dbReference type="NCBIfam" id="TIGR00089">
    <property type="entry name" value="MiaB/RimO family radical SAM methylthiotransferase"/>
    <property type="match status" value="1"/>
</dbReference>
<dbReference type="PANTHER" id="PTHR43020">
    <property type="entry name" value="CDK5 REGULATORY SUBUNIT-ASSOCIATED PROTEIN 1"/>
    <property type="match status" value="1"/>
</dbReference>
<dbReference type="PANTHER" id="PTHR43020:SF2">
    <property type="entry name" value="MITOCHONDRIAL TRNA METHYLTHIOTRANSFERASE CDK5RAP1"/>
    <property type="match status" value="1"/>
</dbReference>
<dbReference type="Pfam" id="PF04055">
    <property type="entry name" value="Radical_SAM"/>
    <property type="match status" value="1"/>
</dbReference>
<dbReference type="Pfam" id="PF01938">
    <property type="entry name" value="TRAM"/>
    <property type="match status" value="1"/>
</dbReference>
<dbReference type="Pfam" id="PF00919">
    <property type="entry name" value="UPF0004"/>
    <property type="match status" value="1"/>
</dbReference>
<dbReference type="SFLD" id="SFLDF00273">
    <property type="entry name" value="(dimethylallyl)adenosine_tRNA"/>
    <property type="match status" value="1"/>
</dbReference>
<dbReference type="SFLD" id="SFLDG01082">
    <property type="entry name" value="B12-binding_domain_containing"/>
    <property type="match status" value="1"/>
</dbReference>
<dbReference type="SFLD" id="SFLDF00413">
    <property type="entry name" value="CDK5RAP1"/>
    <property type="match status" value="1"/>
</dbReference>
<dbReference type="SFLD" id="SFLDS00029">
    <property type="entry name" value="Radical_SAM"/>
    <property type="match status" value="1"/>
</dbReference>
<dbReference type="SMART" id="SM00729">
    <property type="entry name" value="Elp3"/>
    <property type="match status" value="1"/>
</dbReference>
<dbReference type="SUPFAM" id="SSF102114">
    <property type="entry name" value="Radical SAM enzymes"/>
    <property type="match status" value="1"/>
</dbReference>
<dbReference type="PROSITE" id="PS51449">
    <property type="entry name" value="MTTASE_N"/>
    <property type="match status" value="1"/>
</dbReference>
<dbReference type="PROSITE" id="PS01278">
    <property type="entry name" value="MTTASE_RADICAL"/>
    <property type="match status" value="1"/>
</dbReference>
<dbReference type="PROSITE" id="PS51918">
    <property type="entry name" value="RADICAL_SAM"/>
    <property type="match status" value="1"/>
</dbReference>
<dbReference type="PROSITE" id="PS50926">
    <property type="entry name" value="TRAM"/>
    <property type="match status" value="1"/>
</dbReference>
<protein>
    <recommendedName>
        <fullName evidence="1">tRNA-2-methylthio-N(6)-dimethylallyladenosine synthase</fullName>
        <ecNumber evidence="1">2.8.4.3</ecNumber>
    </recommendedName>
    <alternativeName>
        <fullName evidence="1">(Dimethylallyl)adenosine tRNA methylthiotransferase MiaB</fullName>
    </alternativeName>
    <alternativeName>
        <fullName evidence="1">tRNA-i(6)A37 methylthiotransferase</fullName>
    </alternativeName>
</protein>
<name>MIAB_LEPIN</name>
<gene>
    <name evidence="1" type="primary">miaB</name>
    <name type="ordered locus">LA_1105</name>
</gene>
<proteinExistence type="inferred from homology"/>
<comment type="function">
    <text evidence="1">Catalyzes the methylthiolation of N6-(dimethylallyl)adenosine (i(6)A), leading to the formation of 2-methylthio-N6-(dimethylallyl)adenosine (ms(2)i(6)A) at position 37 in tRNAs that read codons beginning with uridine.</text>
</comment>
<comment type="catalytic activity">
    <reaction evidence="1">
        <text>N(6)-dimethylallyladenosine(37) in tRNA + (sulfur carrier)-SH + AH2 + 2 S-adenosyl-L-methionine = 2-methylsulfanyl-N(6)-dimethylallyladenosine(37) in tRNA + (sulfur carrier)-H + 5'-deoxyadenosine + L-methionine + A + S-adenosyl-L-homocysteine + 2 H(+)</text>
        <dbReference type="Rhea" id="RHEA:37067"/>
        <dbReference type="Rhea" id="RHEA-COMP:10375"/>
        <dbReference type="Rhea" id="RHEA-COMP:10376"/>
        <dbReference type="Rhea" id="RHEA-COMP:14737"/>
        <dbReference type="Rhea" id="RHEA-COMP:14739"/>
        <dbReference type="ChEBI" id="CHEBI:13193"/>
        <dbReference type="ChEBI" id="CHEBI:15378"/>
        <dbReference type="ChEBI" id="CHEBI:17319"/>
        <dbReference type="ChEBI" id="CHEBI:17499"/>
        <dbReference type="ChEBI" id="CHEBI:29917"/>
        <dbReference type="ChEBI" id="CHEBI:57844"/>
        <dbReference type="ChEBI" id="CHEBI:57856"/>
        <dbReference type="ChEBI" id="CHEBI:59789"/>
        <dbReference type="ChEBI" id="CHEBI:64428"/>
        <dbReference type="ChEBI" id="CHEBI:74415"/>
        <dbReference type="ChEBI" id="CHEBI:74417"/>
        <dbReference type="EC" id="2.8.4.3"/>
    </reaction>
</comment>
<comment type="cofactor">
    <cofactor evidence="1">
        <name>[4Fe-4S] cluster</name>
        <dbReference type="ChEBI" id="CHEBI:49883"/>
    </cofactor>
    <text evidence="1">Binds 2 [4Fe-4S] clusters. One cluster is coordinated with 3 cysteines and an exchangeable S-adenosyl-L-methionine.</text>
</comment>
<comment type="subunit">
    <text evidence="1">Monomer.</text>
</comment>
<comment type="subcellular location">
    <subcellularLocation>
        <location evidence="1">Cytoplasm</location>
    </subcellularLocation>
</comment>
<comment type="similarity">
    <text evidence="1">Belongs to the methylthiotransferase family. MiaB subfamily.</text>
</comment>